<accession>Q4FUL2</accession>
<feature type="chain" id="PRO_1000018261" description="Tryptophan synthase alpha chain">
    <location>
        <begin position="1"/>
        <end position="278"/>
    </location>
</feature>
<feature type="active site" description="Proton acceptor" evidence="1">
    <location>
        <position position="49"/>
    </location>
</feature>
<feature type="active site" description="Proton acceptor" evidence="1">
    <location>
        <position position="60"/>
    </location>
</feature>
<keyword id="KW-0028">Amino-acid biosynthesis</keyword>
<keyword id="KW-0057">Aromatic amino acid biosynthesis</keyword>
<keyword id="KW-0456">Lyase</keyword>
<keyword id="KW-1185">Reference proteome</keyword>
<keyword id="KW-0822">Tryptophan biosynthesis</keyword>
<comment type="function">
    <text evidence="1">The alpha subunit is responsible for the aldol cleavage of indoleglycerol phosphate to indole and glyceraldehyde 3-phosphate.</text>
</comment>
<comment type="catalytic activity">
    <reaction evidence="1">
        <text>(1S,2R)-1-C-(indol-3-yl)glycerol 3-phosphate + L-serine = D-glyceraldehyde 3-phosphate + L-tryptophan + H2O</text>
        <dbReference type="Rhea" id="RHEA:10532"/>
        <dbReference type="ChEBI" id="CHEBI:15377"/>
        <dbReference type="ChEBI" id="CHEBI:33384"/>
        <dbReference type="ChEBI" id="CHEBI:57912"/>
        <dbReference type="ChEBI" id="CHEBI:58866"/>
        <dbReference type="ChEBI" id="CHEBI:59776"/>
        <dbReference type="EC" id="4.2.1.20"/>
    </reaction>
</comment>
<comment type="pathway">
    <text evidence="1">Amino-acid biosynthesis; L-tryptophan biosynthesis; L-tryptophan from chorismate: step 5/5.</text>
</comment>
<comment type="subunit">
    <text evidence="1">Tetramer of two alpha and two beta chains.</text>
</comment>
<comment type="similarity">
    <text evidence="1">Belongs to the TrpA family.</text>
</comment>
<dbReference type="EC" id="4.2.1.20" evidence="1"/>
<dbReference type="EMBL" id="CP000082">
    <property type="protein sequence ID" value="AAZ18296.1"/>
    <property type="molecule type" value="Genomic_DNA"/>
</dbReference>
<dbReference type="RefSeq" id="WP_011279732.1">
    <property type="nucleotide sequence ID" value="NC_007204.1"/>
</dbReference>
<dbReference type="SMR" id="Q4FUL2"/>
<dbReference type="STRING" id="259536.Psyc_0433"/>
<dbReference type="KEGG" id="par:Psyc_0433"/>
<dbReference type="eggNOG" id="COG0159">
    <property type="taxonomic scope" value="Bacteria"/>
</dbReference>
<dbReference type="HOGENOM" id="CLU_016734_0_0_6"/>
<dbReference type="OrthoDB" id="9804578at2"/>
<dbReference type="UniPathway" id="UPA00035">
    <property type="reaction ID" value="UER00044"/>
</dbReference>
<dbReference type="Proteomes" id="UP000000546">
    <property type="component" value="Chromosome"/>
</dbReference>
<dbReference type="GO" id="GO:0005829">
    <property type="term" value="C:cytosol"/>
    <property type="evidence" value="ECO:0007669"/>
    <property type="project" value="TreeGrafter"/>
</dbReference>
<dbReference type="GO" id="GO:0004834">
    <property type="term" value="F:tryptophan synthase activity"/>
    <property type="evidence" value="ECO:0007669"/>
    <property type="project" value="UniProtKB-UniRule"/>
</dbReference>
<dbReference type="CDD" id="cd04724">
    <property type="entry name" value="Tryptophan_synthase_alpha"/>
    <property type="match status" value="1"/>
</dbReference>
<dbReference type="FunFam" id="3.20.20.70:FF:000037">
    <property type="entry name" value="Tryptophan synthase alpha chain"/>
    <property type="match status" value="1"/>
</dbReference>
<dbReference type="Gene3D" id="3.20.20.70">
    <property type="entry name" value="Aldolase class I"/>
    <property type="match status" value="1"/>
</dbReference>
<dbReference type="HAMAP" id="MF_00131">
    <property type="entry name" value="Trp_synth_alpha"/>
    <property type="match status" value="1"/>
</dbReference>
<dbReference type="InterPro" id="IPR013785">
    <property type="entry name" value="Aldolase_TIM"/>
</dbReference>
<dbReference type="InterPro" id="IPR011060">
    <property type="entry name" value="RibuloseP-bd_barrel"/>
</dbReference>
<dbReference type="InterPro" id="IPR018204">
    <property type="entry name" value="Trp_synthase_alpha_AS"/>
</dbReference>
<dbReference type="InterPro" id="IPR002028">
    <property type="entry name" value="Trp_synthase_suA"/>
</dbReference>
<dbReference type="NCBIfam" id="TIGR00262">
    <property type="entry name" value="trpA"/>
    <property type="match status" value="1"/>
</dbReference>
<dbReference type="PANTHER" id="PTHR43406:SF1">
    <property type="entry name" value="TRYPTOPHAN SYNTHASE ALPHA CHAIN, CHLOROPLASTIC"/>
    <property type="match status" value="1"/>
</dbReference>
<dbReference type="PANTHER" id="PTHR43406">
    <property type="entry name" value="TRYPTOPHAN SYNTHASE, ALPHA CHAIN"/>
    <property type="match status" value="1"/>
</dbReference>
<dbReference type="Pfam" id="PF00290">
    <property type="entry name" value="Trp_syntA"/>
    <property type="match status" value="1"/>
</dbReference>
<dbReference type="SUPFAM" id="SSF51366">
    <property type="entry name" value="Ribulose-phoshate binding barrel"/>
    <property type="match status" value="1"/>
</dbReference>
<dbReference type="PROSITE" id="PS00167">
    <property type="entry name" value="TRP_SYNTHASE_ALPHA"/>
    <property type="match status" value="1"/>
</dbReference>
<gene>
    <name evidence="1" type="primary">trpA</name>
    <name type="ordered locus">Psyc_0433</name>
</gene>
<organism>
    <name type="scientific">Psychrobacter arcticus (strain DSM 17307 / VKM B-2377 / 273-4)</name>
    <dbReference type="NCBI Taxonomy" id="259536"/>
    <lineage>
        <taxon>Bacteria</taxon>
        <taxon>Pseudomonadati</taxon>
        <taxon>Pseudomonadota</taxon>
        <taxon>Gammaproteobacteria</taxon>
        <taxon>Moraxellales</taxon>
        <taxon>Moraxellaceae</taxon>
        <taxon>Psychrobacter</taxon>
    </lineage>
</organism>
<evidence type="ECO:0000255" key="1">
    <source>
        <dbReference type="HAMAP-Rule" id="MF_00131"/>
    </source>
</evidence>
<protein>
    <recommendedName>
        <fullName evidence="1">Tryptophan synthase alpha chain</fullName>
        <ecNumber evidence="1">4.2.1.20</ecNumber>
    </recommendedName>
</protein>
<proteinExistence type="inferred from homology"/>
<name>TRPA_PSYA2</name>
<sequence>MTRIESTFEILKAQNKKALIPYVMAGDPNPSNFVGLLHDLVKHGADMIEVGLPFSDPMADGPTVALAGERALAAGTSTRDALKMVAEFRQQDTQTPIILMGYLNPVEIIGYDNFVALCEQSGVDGILMVDLPPAEAGSFTQHLTEHSMNEIFLLSPTTLPERREQVLTHCGGYIYYVSLKGVTGSATLDTDDVATQVQAIKAETDLPVCVGFGIRDAASAKAIGAHADGIIVGSALVQNFADIDGNDATAVAHAQQKIMAKMTELREALDSLSVSSNG</sequence>
<reference key="1">
    <citation type="journal article" date="2010" name="Appl. Environ. Microbiol.">
        <title>The genome sequence of Psychrobacter arcticus 273-4, a psychroactive Siberian permafrost bacterium, reveals mechanisms for adaptation to low-temperature growth.</title>
        <authorList>
            <person name="Ayala-del-Rio H.L."/>
            <person name="Chain P.S."/>
            <person name="Grzymski J.J."/>
            <person name="Ponder M.A."/>
            <person name="Ivanova N."/>
            <person name="Bergholz P.W."/>
            <person name="Di Bartolo G."/>
            <person name="Hauser L."/>
            <person name="Land M."/>
            <person name="Bakermans C."/>
            <person name="Rodrigues D."/>
            <person name="Klappenbach J."/>
            <person name="Zarka D."/>
            <person name="Larimer F."/>
            <person name="Richardson P."/>
            <person name="Murray A."/>
            <person name="Thomashow M."/>
            <person name="Tiedje J.M."/>
        </authorList>
    </citation>
    <scope>NUCLEOTIDE SEQUENCE [LARGE SCALE GENOMIC DNA]</scope>
    <source>
        <strain>DSM 17307 / VKM B-2377 / 273-4</strain>
    </source>
</reference>